<dbReference type="EMBL" id="BC075305">
    <property type="protein sequence ID" value="AAH75305.1"/>
    <property type="molecule type" value="mRNA"/>
</dbReference>
<dbReference type="RefSeq" id="NP_001005716.1">
    <property type="nucleotide sequence ID" value="NM_001005716.1"/>
</dbReference>
<dbReference type="RefSeq" id="XP_017949327.1">
    <property type="nucleotide sequence ID" value="XM_018093838.1"/>
</dbReference>
<dbReference type="SMR" id="Q6DJ78"/>
<dbReference type="FunCoup" id="Q6DJ78">
    <property type="interactions" value="2973"/>
</dbReference>
<dbReference type="STRING" id="8364.ENSXETP00000022407"/>
<dbReference type="PaxDb" id="8364-ENSXETP00000062907"/>
<dbReference type="DNASU" id="448242"/>
<dbReference type="GeneID" id="448242"/>
<dbReference type="KEGG" id="xtr:448242"/>
<dbReference type="AGR" id="Xenbase:XB-GENE-1032920"/>
<dbReference type="CTD" id="9577"/>
<dbReference type="Xenbase" id="XB-GENE-1032920">
    <property type="gene designation" value="babam2"/>
</dbReference>
<dbReference type="eggNOG" id="ENOG502QUU0">
    <property type="taxonomic scope" value="Eukaryota"/>
</dbReference>
<dbReference type="InParanoid" id="Q6DJ78"/>
<dbReference type="OrthoDB" id="538811at2759"/>
<dbReference type="Reactome" id="R-XTR-5689901">
    <property type="pathway name" value="Metalloprotease DUBs"/>
</dbReference>
<dbReference type="Proteomes" id="UP000008143">
    <property type="component" value="Chromosome 5"/>
</dbReference>
<dbReference type="GO" id="GO:0070531">
    <property type="term" value="C:BRCA1-A complex"/>
    <property type="evidence" value="ECO:0000250"/>
    <property type="project" value="UniProtKB"/>
</dbReference>
<dbReference type="GO" id="GO:0070552">
    <property type="term" value="C:BRISC complex"/>
    <property type="evidence" value="ECO:0000250"/>
    <property type="project" value="UniProtKB"/>
</dbReference>
<dbReference type="GO" id="GO:0005737">
    <property type="term" value="C:cytoplasm"/>
    <property type="evidence" value="ECO:0000250"/>
    <property type="project" value="UniProtKB"/>
</dbReference>
<dbReference type="GO" id="GO:0005634">
    <property type="term" value="C:nucleus"/>
    <property type="evidence" value="ECO:0000250"/>
    <property type="project" value="UniProtKB"/>
</dbReference>
<dbReference type="GO" id="GO:0031593">
    <property type="term" value="F:polyubiquitin modification-dependent protein binding"/>
    <property type="evidence" value="ECO:0000250"/>
    <property type="project" value="UniProtKB"/>
</dbReference>
<dbReference type="GO" id="GO:0006915">
    <property type="term" value="P:apoptotic process"/>
    <property type="evidence" value="ECO:0007669"/>
    <property type="project" value="UniProtKB-KW"/>
</dbReference>
<dbReference type="GO" id="GO:0051301">
    <property type="term" value="P:cell division"/>
    <property type="evidence" value="ECO:0007669"/>
    <property type="project" value="UniProtKB-KW"/>
</dbReference>
<dbReference type="GO" id="GO:0006325">
    <property type="term" value="P:chromatin organization"/>
    <property type="evidence" value="ECO:0007669"/>
    <property type="project" value="UniProtKB-KW"/>
</dbReference>
<dbReference type="GO" id="GO:0006302">
    <property type="term" value="P:double-strand break repair"/>
    <property type="evidence" value="ECO:0000250"/>
    <property type="project" value="UniProtKB"/>
</dbReference>
<dbReference type="GO" id="GO:0007095">
    <property type="term" value="P:mitotic G2 DNA damage checkpoint signaling"/>
    <property type="evidence" value="ECO:0000250"/>
    <property type="project" value="UniProtKB"/>
</dbReference>
<dbReference type="GO" id="GO:0045739">
    <property type="term" value="P:positive regulation of DNA repair"/>
    <property type="evidence" value="ECO:0000250"/>
    <property type="project" value="UniProtKB"/>
</dbReference>
<dbReference type="GO" id="GO:0010212">
    <property type="term" value="P:response to ionizing radiation"/>
    <property type="evidence" value="ECO:0000250"/>
    <property type="project" value="UniProtKB"/>
</dbReference>
<dbReference type="CDD" id="cd23664">
    <property type="entry name" value="BRE"/>
    <property type="match status" value="1"/>
</dbReference>
<dbReference type="InterPro" id="IPR010358">
    <property type="entry name" value="BRE"/>
</dbReference>
<dbReference type="PANTHER" id="PTHR15189">
    <property type="entry name" value="BRISC AND BRCA1-A COMPLEX MEMBER 2"/>
    <property type="match status" value="1"/>
</dbReference>
<dbReference type="PANTHER" id="PTHR15189:SF7">
    <property type="entry name" value="BRISC AND BRCA1-A COMPLEX MEMBER 2"/>
    <property type="match status" value="1"/>
</dbReference>
<dbReference type="Pfam" id="PF06113">
    <property type="entry name" value="BRE"/>
    <property type="match status" value="1"/>
</dbReference>
<feature type="chain" id="PRO_0000373938" description="BRISC and BRCA1-A complex member 2">
    <location>
        <begin position="1"/>
        <end position="383"/>
    </location>
</feature>
<feature type="region of interest" description="UEV-like 1">
    <location>
        <begin position="30"/>
        <end position="147"/>
    </location>
</feature>
<feature type="region of interest" description="UEV-like 2">
    <location>
        <begin position="275"/>
        <end position="364"/>
    </location>
</feature>
<evidence type="ECO:0000250" key="1">
    <source>
        <dbReference type="UniProtKB" id="Q9NXR7"/>
    </source>
</evidence>
<evidence type="ECO:0000255" key="2"/>
<accession>Q6DJ78</accession>
<sequence>MSPEVTLNRISPALSPFISSVVRNGNVGLDSTSCLRITDLKSGCTSLTPGPSCDRFKLHIPYAGETLKWDIIFNATYPELPPDFIFGEDAEFLPDPSALHNLAEWNPSDPECLLLVVKELVQQYHQYQCSRLSESSRLMFEYQTLQEEPQYGENMEIYAGKKNNWTGEFSARFLLKLPVDFSNIPIYLLKDSNEDPGEDVALLSVSFEDAEATQVFPKLFLSPRIEHALGGSSALHIPAFPSGSCLIDYVPQVCQLLTNKVQYVIQGYHKRREYIAAFLSHFGTGVVEYDAEGFTKLTLLLSWKDFCFLVHIDLPLYFPRDQPTLTFQSVYHFTNSGQLYSQAQKNYPYSPRWDGNEMAKRAKAYFRSFVPQFQEAAFANGKL</sequence>
<protein>
    <recommendedName>
        <fullName>BRISC and BRCA1-A complex member 2</fullName>
    </recommendedName>
    <alternativeName>
        <fullName>BRCA1-A complex subunit BRE</fullName>
    </alternativeName>
    <alternativeName>
        <fullName>BRCA1/BRCA2-containing complex subunit 45</fullName>
    </alternativeName>
    <alternativeName>
        <fullName>Brain and reproductive organ-expressed protein</fullName>
    </alternativeName>
</protein>
<comment type="function">
    <text evidence="1">Component of the BRCA1-A complex, a complex that specifically recognizes 'Lys-63'-linked ubiquitinated histones H2A and H2AX at DNA lesions sites, leading to target the brca1-bard1 heterodimer to sites of DNA damage at double-strand breaks (DSBs). The BRCA1-A complex also possesses deubiquitinase activity that specifically removes 'Lys-63'-linked ubiquitin on histones H2A and H2AX. In the BRCA1-A complex, it acts as an adapter that bridges the interaction between babam1/nba1 and the rest of the complex, thereby being required for the complex integrity and modulating the E3 ubiquitin ligase activity of the brca1-bard1 heterodimer. Component of the BRISC complex, a multiprotein complex that specifically cleaves 'Lys-63'-linked ubiquitin in various substrates. Within the BRISC complex, acts as an adapter that bridges the interaction between babam1/nba1 and the rest of the complex, thereby being required for the complex integrity. The BRISC complex is required for normal mitotic spindle assembly and microtubule attachment to kinetochores via its role in deubiquitinating numa1. The BRISC complex plays a role in interferon signaling via its role in the deubiquitination of the interferon receptor ifnar1; deubiquitination increases ifnar1 activity by enhancing its stability and cell surface expression. Down-regulates the response to bacterial lipopolysaccharide (LPS) via its role in ifnar1 deubiquitination. May play a role in homeostasis or cellular differentiation in cells of neural, epithelial and germline origins. May also act as a death receptor-associated anti-apoptotic protein, which inhibits the mitochondrial apoptotic pathway.</text>
</comment>
<comment type="subunit">
    <text evidence="1">Component of the ARISC complex, at least composed of uimc1/rap80, abraxas1, brcc3/brcc36, babam2 and babam1/nba1. Component of the BRCA1-A complex, at least composed of brca1, bard1, uimc1/rap80, abraxas1, brcc3/brcc36, babam2 and babam1/nba1. In the BRCA1-A complex, interacts directly with abraxas1, brcc3/brcc36 and babam1/nba1. Binds polyubiquitin. Component of the BRISC complex, at least composed of abraxas2, brcc3/brcc36, babam2 and babam1/nba1.</text>
</comment>
<comment type="subcellular location">
    <subcellularLocation>
        <location evidence="1">Cytoplasm</location>
    </subcellularLocation>
    <subcellularLocation>
        <location evidence="1">Nucleus</location>
    </subcellularLocation>
    <text evidence="1">Localizes at sites of DNA damage at double-strand breaks (DSBs).</text>
</comment>
<comment type="domain">
    <text evidence="1">Contains 2 ubiquitin-conjugating enzyme family-like (UEV-like) regions. These regions lack the critical Cys residues required for ubiquitination but retain the ability to bind ubiquitin.</text>
</comment>
<comment type="similarity">
    <text evidence="2">Belongs to the BABAM2 family.</text>
</comment>
<name>BABA2_XENTR</name>
<proteinExistence type="evidence at transcript level"/>
<reference key="1">
    <citation type="submission" date="2004-06" db="EMBL/GenBank/DDBJ databases">
        <authorList>
            <consortium name="NIH - Xenopus Gene Collection (XGC) project"/>
        </authorList>
    </citation>
    <scope>NUCLEOTIDE SEQUENCE [LARGE SCALE MRNA]</scope>
</reference>
<gene>
    <name type="primary">babam2</name>
    <name type="synonym">bre</name>
</gene>
<organism>
    <name type="scientific">Xenopus tropicalis</name>
    <name type="common">Western clawed frog</name>
    <name type="synonym">Silurana tropicalis</name>
    <dbReference type="NCBI Taxonomy" id="8364"/>
    <lineage>
        <taxon>Eukaryota</taxon>
        <taxon>Metazoa</taxon>
        <taxon>Chordata</taxon>
        <taxon>Craniata</taxon>
        <taxon>Vertebrata</taxon>
        <taxon>Euteleostomi</taxon>
        <taxon>Amphibia</taxon>
        <taxon>Batrachia</taxon>
        <taxon>Anura</taxon>
        <taxon>Pipoidea</taxon>
        <taxon>Pipidae</taxon>
        <taxon>Xenopodinae</taxon>
        <taxon>Xenopus</taxon>
        <taxon>Silurana</taxon>
    </lineage>
</organism>
<keyword id="KW-0053">Apoptosis</keyword>
<keyword id="KW-0131">Cell cycle</keyword>
<keyword id="KW-0132">Cell division</keyword>
<keyword id="KW-0156">Chromatin regulator</keyword>
<keyword id="KW-0963">Cytoplasm</keyword>
<keyword id="KW-0227">DNA damage</keyword>
<keyword id="KW-0234">DNA repair</keyword>
<keyword id="KW-0498">Mitosis</keyword>
<keyword id="KW-0539">Nucleus</keyword>
<keyword id="KW-1185">Reference proteome</keyword>
<keyword id="KW-0677">Repeat</keyword>
<keyword id="KW-0833">Ubl conjugation pathway</keyword>